<comment type="subcellular location">
    <subcellularLocation>
        <location evidence="1">Secreted</location>
    </subcellularLocation>
</comment>
<comment type="similarity">
    <text evidence="2">Belongs to the IsaB family.</text>
</comment>
<evidence type="ECO:0000250" key="1"/>
<evidence type="ECO:0000305" key="2"/>
<feature type="signal peptide" evidence="1">
    <location>
        <begin position="1"/>
        <end position="36"/>
    </location>
</feature>
<feature type="chain" id="PRO_0000272669" description="Immunodominant staphylococcal antigen B">
    <location>
        <begin position="37"/>
        <end position="175"/>
    </location>
</feature>
<name>ISAB_STAAS</name>
<keyword id="KW-0964">Secreted</keyword>
<keyword id="KW-0732">Signal</keyword>
<accession>Q6G636</accession>
<reference key="1">
    <citation type="journal article" date="2004" name="Proc. Natl. Acad. Sci. U.S.A.">
        <title>Complete genomes of two clinical Staphylococcus aureus strains: evidence for the rapid evolution of virulence and drug resistance.</title>
        <authorList>
            <person name="Holden M.T.G."/>
            <person name="Feil E.J."/>
            <person name="Lindsay J.A."/>
            <person name="Peacock S.J."/>
            <person name="Day N.P.J."/>
            <person name="Enright M.C."/>
            <person name="Foster T.J."/>
            <person name="Moore C.E."/>
            <person name="Hurst L."/>
            <person name="Atkin R."/>
            <person name="Barron A."/>
            <person name="Bason N."/>
            <person name="Bentley S.D."/>
            <person name="Chillingworth C."/>
            <person name="Chillingworth T."/>
            <person name="Churcher C."/>
            <person name="Clark L."/>
            <person name="Corton C."/>
            <person name="Cronin A."/>
            <person name="Doggett J."/>
            <person name="Dowd L."/>
            <person name="Feltwell T."/>
            <person name="Hance Z."/>
            <person name="Harris B."/>
            <person name="Hauser H."/>
            <person name="Holroyd S."/>
            <person name="Jagels K."/>
            <person name="James K.D."/>
            <person name="Lennard N."/>
            <person name="Line A."/>
            <person name="Mayes R."/>
            <person name="Moule S."/>
            <person name="Mungall K."/>
            <person name="Ormond D."/>
            <person name="Quail M.A."/>
            <person name="Rabbinowitsch E."/>
            <person name="Rutherford K.M."/>
            <person name="Sanders M."/>
            <person name="Sharp S."/>
            <person name="Simmonds M."/>
            <person name="Stevens K."/>
            <person name="Whitehead S."/>
            <person name="Barrell B.G."/>
            <person name="Spratt B.G."/>
            <person name="Parkhill J."/>
        </authorList>
    </citation>
    <scope>NUCLEOTIDE SEQUENCE [LARGE SCALE GENOMIC DNA]</scope>
    <source>
        <strain>MSSA476</strain>
    </source>
</reference>
<gene>
    <name type="primary">isaB</name>
    <name type="ordered locus">SAS2524</name>
</gene>
<proteinExistence type="inferred from homology"/>
<sequence length="175" mass="19370">MNKTSKVCVAATLALGTLIGVTVVENSAPTSKQAQAAITPYYTYNGYIGNNANFILDKNFINAIKYDNVKFNGIKLAKTNTIKKVEKYDQTFKGVSAKGNEASQLQFVVKNNISLKDIQKAYGKDLKKENGKTKEADSGIFYYQNAKKTLGIWFVVDHNRVVEVTVGHTPYKTSK</sequence>
<dbReference type="EMBL" id="BX571857">
    <property type="protein sequence ID" value="CAG44341.1"/>
    <property type="molecule type" value="Genomic_DNA"/>
</dbReference>
<dbReference type="RefSeq" id="WP_001044560.1">
    <property type="nucleotide sequence ID" value="NC_002953.3"/>
</dbReference>
<dbReference type="SMR" id="Q6G636"/>
<dbReference type="KEGG" id="sas:SAS2524"/>
<dbReference type="HOGENOM" id="CLU_119552_0_0_9"/>
<dbReference type="GO" id="GO:0005576">
    <property type="term" value="C:extracellular region"/>
    <property type="evidence" value="ECO:0007669"/>
    <property type="project" value="UniProtKB-SubCell"/>
</dbReference>
<dbReference type="NCBIfam" id="NF047686">
    <property type="entry name" value="IsaB_fam"/>
    <property type="match status" value="1"/>
</dbReference>
<organism>
    <name type="scientific">Staphylococcus aureus (strain MSSA476)</name>
    <dbReference type="NCBI Taxonomy" id="282459"/>
    <lineage>
        <taxon>Bacteria</taxon>
        <taxon>Bacillati</taxon>
        <taxon>Bacillota</taxon>
        <taxon>Bacilli</taxon>
        <taxon>Bacillales</taxon>
        <taxon>Staphylococcaceae</taxon>
        <taxon>Staphylococcus</taxon>
    </lineage>
</organism>
<protein>
    <recommendedName>
        <fullName>Immunodominant staphylococcal antigen B</fullName>
    </recommendedName>
</protein>